<reference key="1">
    <citation type="journal article" date="2007" name="Proc. Natl. Acad. Sci. U.S.A.">
        <title>Using plastid genome-scale data to resolve enigmatic relationships among basal angiosperms.</title>
        <authorList>
            <person name="Moore M.J."/>
            <person name="Bell C.D."/>
            <person name="Soltis P.S."/>
            <person name="Soltis D.E."/>
        </authorList>
    </citation>
    <scope>NUCLEOTIDE SEQUENCE [LARGE SCALE GENOMIC DNA]</scope>
</reference>
<protein>
    <recommendedName>
        <fullName evidence="1">Small ribosomal subunit protein uS14c</fullName>
    </recommendedName>
    <alternativeName>
        <fullName evidence="2">30S ribosomal protein S14, chloroplastic</fullName>
    </alternativeName>
</protein>
<accession>A8SEA1</accession>
<sequence length="100" mass="11772">MARKSLIQRERKRQKLEQKYHLIRRSSKKEISEVPSLSDKWEIHGKLQSPPRNSAPTRLHRRCFSTGRPRANYRDFGLSGHILREMFNACLLPGATRSSW</sequence>
<gene>
    <name evidence="1" type="primary">rps14</name>
</gene>
<dbReference type="EMBL" id="EF614270">
    <property type="protein sequence ID" value="ABQ81448.1"/>
    <property type="molecule type" value="Genomic_DNA"/>
</dbReference>
<dbReference type="RefSeq" id="YP_001542445.1">
    <property type="nucleotide sequence ID" value="NC_009962.1"/>
</dbReference>
<dbReference type="SMR" id="A8SEA1"/>
<dbReference type="GeneID" id="5729395"/>
<dbReference type="GO" id="GO:0009507">
    <property type="term" value="C:chloroplast"/>
    <property type="evidence" value="ECO:0007669"/>
    <property type="project" value="UniProtKB-SubCell"/>
</dbReference>
<dbReference type="GO" id="GO:0015935">
    <property type="term" value="C:small ribosomal subunit"/>
    <property type="evidence" value="ECO:0007669"/>
    <property type="project" value="TreeGrafter"/>
</dbReference>
<dbReference type="GO" id="GO:0019843">
    <property type="term" value="F:rRNA binding"/>
    <property type="evidence" value="ECO:0007669"/>
    <property type="project" value="UniProtKB-UniRule"/>
</dbReference>
<dbReference type="GO" id="GO:0003735">
    <property type="term" value="F:structural constituent of ribosome"/>
    <property type="evidence" value="ECO:0007669"/>
    <property type="project" value="InterPro"/>
</dbReference>
<dbReference type="GO" id="GO:0006412">
    <property type="term" value="P:translation"/>
    <property type="evidence" value="ECO:0007669"/>
    <property type="project" value="UniProtKB-UniRule"/>
</dbReference>
<dbReference type="FunFam" id="1.10.287.1480:FF:000001">
    <property type="entry name" value="30S ribosomal protein S14"/>
    <property type="match status" value="1"/>
</dbReference>
<dbReference type="Gene3D" id="1.10.287.1480">
    <property type="match status" value="1"/>
</dbReference>
<dbReference type="HAMAP" id="MF_00537">
    <property type="entry name" value="Ribosomal_uS14_1"/>
    <property type="match status" value="1"/>
</dbReference>
<dbReference type="InterPro" id="IPR001209">
    <property type="entry name" value="Ribosomal_uS14"/>
</dbReference>
<dbReference type="InterPro" id="IPR023036">
    <property type="entry name" value="Ribosomal_uS14_bac/plastid"/>
</dbReference>
<dbReference type="InterPro" id="IPR018271">
    <property type="entry name" value="Ribosomal_uS14_CS"/>
</dbReference>
<dbReference type="NCBIfam" id="NF006477">
    <property type="entry name" value="PRK08881.1"/>
    <property type="match status" value="1"/>
</dbReference>
<dbReference type="PANTHER" id="PTHR19836">
    <property type="entry name" value="30S RIBOSOMAL PROTEIN S14"/>
    <property type="match status" value="1"/>
</dbReference>
<dbReference type="PANTHER" id="PTHR19836:SF19">
    <property type="entry name" value="SMALL RIBOSOMAL SUBUNIT PROTEIN US14M"/>
    <property type="match status" value="1"/>
</dbReference>
<dbReference type="Pfam" id="PF00253">
    <property type="entry name" value="Ribosomal_S14"/>
    <property type="match status" value="1"/>
</dbReference>
<dbReference type="SUPFAM" id="SSF57716">
    <property type="entry name" value="Glucocorticoid receptor-like (DNA-binding domain)"/>
    <property type="match status" value="1"/>
</dbReference>
<dbReference type="PROSITE" id="PS00527">
    <property type="entry name" value="RIBOSOMAL_S14"/>
    <property type="match status" value="1"/>
</dbReference>
<comment type="function">
    <text evidence="1">Binds 16S rRNA, required for the assembly of 30S particles.</text>
</comment>
<comment type="subunit">
    <text evidence="1">Part of the 30S ribosomal subunit.</text>
</comment>
<comment type="subcellular location">
    <subcellularLocation>
        <location>Plastid</location>
        <location>Chloroplast</location>
    </subcellularLocation>
</comment>
<comment type="similarity">
    <text evidence="1">Belongs to the universal ribosomal protein uS14 family.</text>
</comment>
<organism>
    <name type="scientific">Ceratophyllum demersum</name>
    <name type="common">Rigid hornwort</name>
    <name type="synonym">Coontail</name>
    <dbReference type="NCBI Taxonomy" id="4428"/>
    <lineage>
        <taxon>Eukaryota</taxon>
        <taxon>Viridiplantae</taxon>
        <taxon>Streptophyta</taxon>
        <taxon>Embryophyta</taxon>
        <taxon>Tracheophyta</taxon>
        <taxon>Spermatophyta</taxon>
        <taxon>Magnoliopsida</taxon>
        <taxon>Ceratophyllales</taxon>
        <taxon>Ceratophyllaceae</taxon>
        <taxon>Ceratophyllum</taxon>
    </lineage>
</organism>
<evidence type="ECO:0000255" key="1">
    <source>
        <dbReference type="HAMAP-Rule" id="MF_00537"/>
    </source>
</evidence>
<evidence type="ECO:0000305" key="2"/>
<feature type="chain" id="PRO_0000354405" description="Small ribosomal subunit protein uS14c">
    <location>
        <begin position="1"/>
        <end position="100"/>
    </location>
</feature>
<name>RR14_CERDE</name>
<keyword id="KW-0150">Chloroplast</keyword>
<keyword id="KW-0934">Plastid</keyword>
<keyword id="KW-0687">Ribonucleoprotein</keyword>
<keyword id="KW-0689">Ribosomal protein</keyword>
<keyword id="KW-0694">RNA-binding</keyword>
<keyword id="KW-0699">rRNA-binding</keyword>
<proteinExistence type="inferred from homology"/>
<geneLocation type="chloroplast"/>